<name>B3GN9_HUMAN</name>
<dbReference type="EC" id="2.4.1.-"/>
<dbReference type="EMBL" id="AY358485">
    <property type="protein sequence ID" value="AAQ88849.1"/>
    <property type="molecule type" value="mRNA"/>
</dbReference>
<dbReference type="EMBL" id="CH471092">
    <property type="protein sequence ID" value="EAW83079.1"/>
    <property type="molecule type" value="Genomic_DNA"/>
</dbReference>
<dbReference type="EMBL" id="BC012191">
    <property type="status" value="NOT_ANNOTATED_CDS"/>
    <property type="molecule type" value="mRNA"/>
</dbReference>
<dbReference type="CCDS" id="CCDS45509.1"/>
<dbReference type="RefSeq" id="NP_171608.2">
    <property type="nucleotide sequence ID" value="NM_033309.3"/>
</dbReference>
<dbReference type="SMR" id="Q6UX72"/>
<dbReference type="BioGRID" id="124240">
    <property type="interactions" value="4"/>
</dbReference>
<dbReference type="FunCoup" id="Q6UX72">
    <property type="interactions" value="67"/>
</dbReference>
<dbReference type="IntAct" id="Q6UX72">
    <property type="interactions" value="2"/>
</dbReference>
<dbReference type="STRING" id="9606.ENSP00000400157"/>
<dbReference type="CAZy" id="GT31">
    <property type="family name" value="Glycosyltransferase Family 31"/>
</dbReference>
<dbReference type="GlyCosmos" id="Q6UX72">
    <property type="glycosylation" value="3 sites, 1 glycan"/>
</dbReference>
<dbReference type="GlyGen" id="Q6UX72">
    <property type="glycosylation" value="8 sites, 2 O-linked glycans (5 sites)"/>
</dbReference>
<dbReference type="iPTMnet" id="Q6UX72"/>
<dbReference type="PhosphoSitePlus" id="Q6UX72"/>
<dbReference type="BioMuta" id="B3GNT9"/>
<dbReference type="DMDM" id="74738184"/>
<dbReference type="jPOST" id="Q6UX72"/>
<dbReference type="MassIVE" id="Q6UX72"/>
<dbReference type="PaxDb" id="9606-ENSP00000400157"/>
<dbReference type="PeptideAtlas" id="Q6UX72"/>
<dbReference type="ProteomicsDB" id="67574"/>
<dbReference type="TopDownProteomics" id="Q6UX72"/>
<dbReference type="Antibodypedia" id="65852">
    <property type="antibodies" value="9 antibodies from 5 providers"/>
</dbReference>
<dbReference type="DNASU" id="84752"/>
<dbReference type="Ensembl" id="ENST00000449549.4">
    <property type="protein sequence ID" value="ENSP00000400157.3"/>
    <property type="gene ID" value="ENSG00000237172.4"/>
</dbReference>
<dbReference type="GeneID" id="84752"/>
<dbReference type="KEGG" id="hsa:84752"/>
<dbReference type="MANE-Select" id="ENST00000449549.4">
    <property type="protein sequence ID" value="ENSP00000400157.3"/>
    <property type="RefSeq nucleotide sequence ID" value="NM_033309.3"/>
    <property type="RefSeq protein sequence ID" value="NP_171608.2"/>
</dbReference>
<dbReference type="UCSC" id="uc002erf.4">
    <property type="organism name" value="human"/>
</dbReference>
<dbReference type="AGR" id="HGNC:28714"/>
<dbReference type="CTD" id="84752"/>
<dbReference type="DisGeNET" id="84752"/>
<dbReference type="GeneCards" id="B3GNT9"/>
<dbReference type="HGNC" id="HGNC:28714">
    <property type="gene designation" value="B3GNT9"/>
</dbReference>
<dbReference type="HPA" id="ENSG00000237172">
    <property type="expression patterns" value="Low tissue specificity"/>
</dbReference>
<dbReference type="neXtProt" id="NX_Q6UX72"/>
<dbReference type="OpenTargets" id="ENSG00000237172"/>
<dbReference type="PharmGKB" id="PA164716431"/>
<dbReference type="VEuPathDB" id="HostDB:ENSG00000237172"/>
<dbReference type="eggNOG" id="KOG2287">
    <property type="taxonomic scope" value="Eukaryota"/>
</dbReference>
<dbReference type="GeneTree" id="ENSGT00940000162243"/>
<dbReference type="HOGENOM" id="CLU_036849_5_2_1"/>
<dbReference type="InParanoid" id="Q6UX72"/>
<dbReference type="OMA" id="PFQWKKK"/>
<dbReference type="OrthoDB" id="2139606at2759"/>
<dbReference type="PAN-GO" id="Q6UX72">
    <property type="GO annotations" value="3 GO annotations based on evolutionary models"/>
</dbReference>
<dbReference type="PhylomeDB" id="Q6UX72"/>
<dbReference type="TreeFam" id="TF318639"/>
<dbReference type="PathwayCommons" id="Q6UX72"/>
<dbReference type="Reactome" id="R-HSA-913709">
    <property type="pathway name" value="O-linked glycosylation of mucins"/>
</dbReference>
<dbReference type="SignaLink" id="Q6UX72"/>
<dbReference type="BioGRID-ORCS" id="84752">
    <property type="hits" value="13 hits in 1141 CRISPR screens"/>
</dbReference>
<dbReference type="ChiTaRS" id="B3GNT9">
    <property type="organism name" value="human"/>
</dbReference>
<dbReference type="GenomeRNAi" id="84752"/>
<dbReference type="Pharos" id="Q6UX72">
    <property type="development level" value="Tdark"/>
</dbReference>
<dbReference type="PRO" id="PR:Q6UX72"/>
<dbReference type="Proteomes" id="UP000005640">
    <property type="component" value="Chromosome 16"/>
</dbReference>
<dbReference type="RNAct" id="Q6UX72">
    <property type="molecule type" value="protein"/>
</dbReference>
<dbReference type="Bgee" id="ENSG00000237172">
    <property type="expression patterns" value="Expressed in stromal cell of endometrium and 167 other cell types or tissues"/>
</dbReference>
<dbReference type="GO" id="GO:0000139">
    <property type="term" value="C:Golgi membrane"/>
    <property type="evidence" value="ECO:0000318"/>
    <property type="project" value="GO_Central"/>
</dbReference>
<dbReference type="GO" id="GO:0016758">
    <property type="term" value="F:hexosyltransferase activity"/>
    <property type="evidence" value="ECO:0007669"/>
    <property type="project" value="InterPro"/>
</dbReference>
<dbReference type="GO" id="GO:0008194">
    <property type="term" value="F:UDP-glycosyltransferase activity"/>
    <property type="evidence" value="ECO:0000318"/>
    <property type="project" value="GO_Central"/>
</dbReference>
<dbReference type="GO" id="GO:0030311">
    <property type="term" value="P:poly-N-acetyllactosamine biosynthetic process"/>
    <property type="evidence" value="ECO:0000318"/>
    <property type="project" value="GO_Central"/>
</dbReference>
<dbReference type="GO" id="GO:0006493">
    <property type="term" value="P:protein O-linked glycosylation"/>
    <property type="evidence" value="ECO:0000318"/>
    <property type="project" value="GO_Central"/>
</dbReference>
<dbReference type="FunFam" id="3.90.550.50:FF:000020">
    <property type="entry name" value="Hexosyltransferase"/>
    <property type="match status" value="1"/>
</dbReference>
<dbReference type="Gene3D" id="3.90.550.50">
    <property type="match status" value="1"/>
</dbReference>
<dbReference type="InterPro" id="IPR002659">
    <property type="entry name" value="Glyco_trans_31"/>
</dbReference>
<dbReference type="PANTHER" id="PTHR11214">
    <property type="entry name" value="BETA-1,3-N-ACETYLGLUCOSAMINYLTRANSFERASE"/>
    <property type="match status" value="1"/>
</dbReference>
<dbReference type="PANTHER" id="PTHR11214:SF91">
    <property type="entry name" value="UDP-GLCNAC:BETAGAL BETA-1,3-N-ACETYLGLUCOSAMINYLTRANSFERASE 9"/>
    <property type="match status" value="1"/>
</dbReference>
<dbReference type="Pfam" id="PF01762">
    <property type="entry name" value="Galactosyl_T"/>
    <property type="match status" value="1"/>
</dbReference>
<reference evidence="3 4" key="1">
    <citation type="journal article" date="2003" name="Genome Res.">
        <title>The secreted protein discovery initiative (SPDI), a large-scale effort to identify novel human secreted and transmembrane proteins: a bioinformatics assessment.</title>
        <authorList>
            <person name="Clark H.F."/>
            <person name="Gurney A.L."/>
            <person name="Abaya E."/>
            <person name="Baker K."/>
            <person name="Baldwin D.T."/>
            <person name="Brush J."/>
            <person name="Chen J."/>
            <person name="Chow B."/>
            <person name="Chui C."/>
            <person name="Crowley C."/>
            <person name="Currell B."/>
            <person name="Deuel B."/>
            <person name="Dowd P."/>
            <person name="Eaton D."/>
            <person name="Foster J.S."/>
            <person name="Grimaldi C."/>
            <person name="Gu Q."/>
            <person name="Hass P.E."/>
            <person name="Heldens S."/>
            <person name="Huang A."/>
            <person name="Kim H.S."/>
            <person name="Klimowski L."/>
            <person name="Jin Y."/>
            <person name="Johnson S."/>
            <person name="Lee J."/>
            <person name="Lewis L."/>
            <person name="Liao D."/>
            <person name="Mark M.R."/>
            <person name="Robbie E."/>
            <person name="Sanchez C."/>
            <person name="Schoenfeld J."/>
            <person name="Seshagiri S."/>
            <person name="Simmons L."/>
            <person name="Singh J."/>
            <person name="Smith V."/>
            <person name="Stinson J."/>
            <person name="Vagts A."/>
            <person name="Vandlen R.L."/>
            <person name="Watanabe C."/>
            <person name="Wieand D."/>
            <person name="Woods K."/>
            <person name="Xie M.-H."/>
            <person name="Yansura D.G."/>
            <person name="Yi S."/>
            <person name="Yu G."/>
            <person name="Yuan J."/>
            <person name="Zhang M."/>
            <person name="Zhang Z."/>
            <person name="Goddard A.D."/>
            <person name="Wood W.I."/>
            <person name="Godowski P.J."/>
            <person name="Gray A.M."/>
        </authorList>
    </citation>
    <scope>NUCLEOTIDE SEQUENCE [LARGE SCALE MRNA]</scope>
</reference>
<reference evidence="5" key="2">
    <citation type="submission" date="2005-07" db="EMBL/GenBank/DDBJ databases">
        <authorList>
            <person name="Mural R.J."/>
            <person name="Istrail S."/>
            <person name="Sutton G.G."/>
            <person name="Florea L."/>
            <person name="Halpern A.L."/>
            <person name="Mobarry C.M."/>
            <person name="Lippert R."/>
            <person name="Walenz B."/>
            <person name="Shatkay H."/>
            <person name="Dew I."/>
            <person name="Miller J.R."/>
            <person name="Flanigan M.J."/>
            <person name="Edwards N.J."/>
            <person name="Bolanos R."/>
            <person name="Fasulo D."/>
            <person name="Halldorsson B.V."/>
            <person name="Hannenhalli S."/>
            <person name="Turner R."/>
            <person name="Yooseph S."/>
            <person name="Lu F."/>
            <person name="Nusskern D.R."/>
            <person name="Shue B.C."/>
            <person name="Zheng X.H."/>
            <person name="Zhong F."/>
            <person name="Delcher A.L."/>
            <person name="Huson D.H."/>
            <person name="Kravitz S.A."/>
            <person name="Mouchard L."/>
            <person name="Reinert K."/>
            <person name="Remington K.A."/>
            <person name="Clark A.G."/>
            <person name="Waterman M.S."/>
            <person name="Eichler E.E."/>
            <person name="Adams M.D."/>
            <person name="Hunkapiller M.W."/>
            <person name="Myers E.W."/>
            <person name="Venter J.C."/>
        </authorList>
    </citation>
    <scope>NUCLEOTIDE SEQUENCE [LARGE SCALE GENOMIC DNA]</scope>
</reference>
<reference evidence="3" key="3">
    <citation type="journal article" date="2004" name="Genome Res.">
        <title>The status, quality, and expansion of the NIH full-length cDNA project: the Mammalian Gene Collection (MGC).</title>
        <authorList>
            <consortium name="The MGC Project Team"/>
        </authorList>
    </citation>
    <scope>NUCLEOTIDE SEQUENCE [LARGE SCALE MRNA]</scope>
    <source>
        <tissue>Lung</tissue>
    </source>
</reference>
<accession>Q6UX72</accession>
<accession>Q96EK0</accession>
<feature type="chain" id="PRO_0000352762" description="UDP-GlcNAc:betaGal beta-1,3-N-acetylglucosaminyltransferase 9">
    <location>
        <begin position="1"/>
        <end position="402"/>
    </location>
</feature>
<feature type="topological domain" description="Cytoplasmic" evidence="1">
    <location>
        <begin position="1"/>
        <end position="10"/>
    </location>
</feature>
<feature type="transmembrane region" description="Helical; Signal-anchor for type II membrane protein" evidence="1">
    <location>
        <begin position="11"/>
        <end position="27"/>
    </location>
</feature>
<feature type="topological domain" description="Lumenal" evidence="1">
    <location>
        <begin position="28"/>
        <end position="402"/>
    </location>
</feature>
<feature type="region of interest" description="Disordered" evidence="2">
    <location>
        <begin position="32"/>
        <end position="83"/>
    </location>
</feature>
<feature type="compositionally biased region" description="Low complexity" evidence="2">
    <location>
        <begin position="32"/>
        <end position="47"/>
    </location>
</feature>
<comment type="subcellular location">
    <subcellularLocation>
        <location evidence="1">Golgi apparatus membrane</location>
        <topology evidence="1">Single-pass type II membrane protein</topology>
    </subcellularLocation>
</comment>
<comment type="similarity">
    <text evidence="1">Belongs to the glycosyltransferase 31 family.</text>
</comment>
<comment type="sequence caution" evidence="3">
    <conflict type="frameshift">
        <sequence resource="EMBL" id="BC012191"/>
    </conflict>
</comment>
<sequence length="402" mass="43751">MRRRLRLRRDALLTLLLGASLGLLLYAQRDGAAPTASAPRGRGRAAPRPTPGPRAFQLPDAGAAPPAYEGDTPAPPTPTGPFDFARYLRAKDQRRFPLLINQPHKCRGDGAPGGRPDLLIAVKSVAEDFERRQAVRQTWGAEGRVQGALVRRVFLLGVPRGAGSGGADEVGEGARTHWRALLRAESLAYADILLWAFDDTFFNLTLKEIHFLAWASAFCPDVRFVFKGDADVFVNVGNLLEFLAPRDPAQDLLAGDVIVHARPIRTRASKYYIPEAVYGLPAYPAYAGGGGFVLSGATLHRLAGACAQVELFPIDDVFLGMCLQRLRLTPEPHPAFRTFGIPQPSAAPHLSTFDPCFYRELVVVHGLSAADIWLMWRLLHGPHGPACAHPQPVAAGPFQWDS</sequence>
<proteinExistence type="evidence at protein level"/>
<evidence type="ECO:0000255" key="1"/>
<evidence type="ECO:0000256" key="2">
    <source>
        <dbReference type="SAM" id="MobiDB-lite"/>
    </source>
</evidence>
<evidence type="ECO:0000305" key="3"/>
<evidence type="ECO:0000312" key="4">
    <source>
        <dbReference type="EMBL" id="AAQ88849.1"/>
    </source>
</evidence>
<evidence type="ECO:0000312" key="5">
    <source>
        <dbReference type="EMBL" id="EAW83079.1"/>
    </source>
</evidence>
<evidence type="ECO:0000312" key="6">
    <source>
        <dbReference type="HGNC" id="HGNC:28714"/>
    </source>
</evidence>
<organism>
    <name type="scientific">Homo sapiens</name>
    <name type="common">Human</name>
    <dbReference type="NCBI Taxonomy" id="9606"/>
    <lineage>
        <taxon>Eukaryota</taxon>
        <taxon>Metazoa</taxon>
        <taxon>Chordata</taxon>
        <taxon>Craniata</taxon>
        <taxon>Vertebrata</taxon>
        <taxon>Euteleostomi</taxon>
        <taxon>Mammalia</taxon>
        <taxon>Eutheria</taxon>
        <taxon>Euarchontoglires</taxon>
        <taxon>Primates</taxon>
        <taxon>Haplorrhini</taxon>
        <taxon>Catarrhini</taxon>
        <taxon>Hominidae</taxon>
        <taxon>Homo</taxon>
    </lineage>
</organism>
<protein>
    <recommendedName>
        <fullName evidence="6">UDP-GlcNAc:betaGal beta-1,3-N-acetylglucosaminyltransferase 9</fullName>
        <shortName evidence="6">BGnT-9</shortName>
        <shortName>Beta-1,3-Gn-T9</shortName>
        <shortName>Beta-1,3-N-acetylglucosaminyltransferase 9</shortName>
        <shortName evidence="6">Beta3Gn-T9</shortName>
        <ecNumber>2.4.1.-</ecNumber>
    </recommendedName>
</protein>
<gene>
    <name evidence="6" type="primary">B3GNT9</name>
    <name type="ORF">UNQ1922/PRO4397</name>
</gene>
<keyword id="KW-0328">Glycosyltransferase</keyword>
<keyword id="KW-0333">Golgi apparatus</keyword>
<keyword id="KW-0472">Membrane</keyword>
<keyword id="KW-1267">Proteomics identification</keyword>
<keyword id="KW-1185">Reference proteome</keyword>
<keyword id="KW-0735">Signal-anchor</keyword>
<keyword id="KW-0808">Transferase</keyword>
<keyword id="KW-0812">Transmembrane</keyword>
<keyword id="KW-1133">Transmembrane helix</keyword>